<accession>P05771</accession>
<accession>C5IFJ8</accession>
<accession>D3DWF5</accession>
<accession>O43744</accession>
<accession>P05127</accession>
<accession>Q15138</accession>
<accession>Q93060</accession>
<accession>Q9UE49</accession>
<accession>Q9UE50</accession>
<accession>Q9UEH8</accession>
<accession>Q9UJ30</accession>
<accession>Q9UJ33</accession>
<name>KPCB_HUMAN</name>
<dbReference type="EC" id="2.7.11.13" evidence="18 19 20 21"/>
<dbReference type="EMBL" id="M13975">
    <property type="protein sequence ID" value="AAA60095.1"/>
    <property type="molecule type" value="mRNA"/>
</dbReference>
<dbReference type="EMBL" id="X06318">
    <property type="protein sequence ID" value="CAA29634.1"/>
    <property type="molecule type" value="mRNA"/>
</dbReference>
<dbReference type="EMBL" id="X07109">
    <property type="protein sequence ID" value="CAA30130.1"/>
    <property type="molecule type" value="mRNA"/>
</dbReference>
<dbReference type="EMBL" id="FJ907246">
    <property type="protein sequence ID" value="ACS14045.1"/>
    <property type="molecule type" value="Genomic_DNA"/>
</dbReference>
<dbReference type="EMBL" id="AC130454">
    <property type="status" value="NOT_ANNOTATED_CDS"/>
    <property type="molecule type" value="Genomic_DNA"/>
</dbReference>
<dbReference type="EMBL" id="AC002299">
    <property type="protein sequence ID" value="AAB97933.1"/>
    <property type="molecule type" value="Genomic_DNA"/>
</dbReference>
<dbReference type="EMBL" id="AC002299">
    <property type="protein sequence ID" value="AAB97934.1"/>
    <property type="molecule type" value="Genomic_DNA"/>
</dbReference>
<dbReference type="EMBL" id="CH471145">
    <property type="protein sequence ID" value="EAW55797.1"/>
    <property type="molecule type" value="Genomic_DNA"/>
</dbReference>
<dbReference type="EMBL" id="CH471145">
    <property type="protein sequence ID" value="EAW55798.1"/>
    <property type="molecule type" value="Genomic_DNA"/>
</dbReference>
<dbReference type="EMBL" id="BC036472">
    <property type="protein sequence ID" value="AAH36472.1"/>
    <property type="molecule type" value="mRNA"/>
</dbReference>
<dbReference type="EMBL" id="X62532">
    <property type="protein sequence ID" value="CAA44393.1"/>
    <property type="molecule type" value="Genomic_DNA"/>
</dbReference>
<dbReference type="EMBL" id="S47311">
    <property type="protein sequence ID" value="AAD13852.1"/>
    <property type="molecule type" value="Genomic_DNA"/>
</dbReference>
<dbReference type="EMBL" id="D10022">
    <property type="protein sequence ID" value="BAA00912.1"/>
    <property type="molecule type" value="Genomic_DNA"/>
</dbReference>
<dbReference type="EMBL" id="AJ002799">
    <property type="protein sequence ID" value="CAA05725.1"/>
    <property type="molecule type" value="Genomic_DNA"/>
</dbReference>
<dbReference type="EMBL" id="AJ002800">
    <property type="protein sequence ID" value="CAA05725.1"/>
    <property type="status" value="JOINED"/>
    <property type="molecule type" value="Genomic_DNA"/>
</dbReference>
<dbReference type="EMBL" id="M18254">
    <property type="protein sequence ID" value="AAA60096.1"/>
    <property type="molecule type" value="Genomic_DNA"/>
</dbReference>
<dbReference type="EMBL" id="M18255">
    <property type="protein sequence ID" value="AAA60097.1"/>
    <property type="molecule type" value="Genomic_DNA"/>
</dbReference>
<dbReference type="EMBL" id="X05972">
    <property type="protein sequence ID" value="CAA29396.1"/>
    <property type="molecule type" value="Genomic_DNA"/>
</dbReference>
<dbReference type="EMBL" id="X05971">
    <property type="protein sequence ID" value="CAA29395.1"/>
    <property type="molecule type" value="Genomic_DNA"/>
</dbReference>
<dbReference type="CCDS" id="CCDS10618.1">
    <molecule id="P05771-1"/>
</dbReference>
<dbReference type="CCDS" id="CCDS10619.1">
    <molecule id="P05771-2"/>
</dbReference>
<dbReference type="PIR" id="B24664">
    <property type="entry name" value="KIHUC2"/>
</dbReference>
<dbReference type="PIR" id="S00159">
    <property type="entry name" value="KIHUC1"/>
</dbReference>
<dbReference type="RefSeq" id="NP_002729.2">
    <molecule id="P05771-2"/>
    <property type="nucleotide sequence ID" value="NM_002738.6"/>
</dbReference>
<dbReference type="RefSeq" id="NP_997700.1">
    <molecule id="P05771-1"/>
    <property type="nucleotide sequence ID" value="NM_212535.3"/>
</dbReference>
<dbReference type="PDB" id="2I0E">
    <property type="method" value="X-ray"/>
    <property type="resolution" value="2.60 A"/>
    <property type="chains" value="A/B=321-671"/>
</dbReference>
<dbReference type="PDB" id="8SG2">
    <property type="method" value="NMR"/>
    <property type="chains" value="B=641-662"/>
</dbReference>
<dbReference type="PDBsum" id="2I0E"/>
<dbReference type="PDBsum" id="8SG2"/>
<dbReference type="SMR" id="P05771"/>
<dbReference type="BioGRID" id="111565">
    <property type="interactions" value="205"/>
</dbReference>
<dbReference type="CORUM" id="P05771"/>
<dbReference type="DIP" id="DIP-34187N"/>
<dbReference type="FunCoup" id="P05771">
    <property type="interactions" value="3545"/>
</dbReference>
<dbReference type="IntAct" id="P05771">
    <property type="interactions" value="155"/>
</dbReference>
<dbReference type="MINT" id="P05771"/>
<dbReference type="STRING" id="9606.ENSP00000496129"/>
<dbReference type="BindingDB" id="P05771"/>
<dbReference type="ChEMBL" id="CHEMBL3045"/>
<dbReference type="DrugBank" id="DB14001">
    <property type="generic name" value="alpha-Tocopherol succinate"/>
</dbReference>
<dbReference type="DrugBank" id="DB09096">
    <property type="generic name" value="Benzoyl peroxide"/>
</dbReference>
<dbReference type="DrugBank" id="DB08862">
    <property type="generic name" value="Cholecystokinin"/>
</dbReference>
<dbReference type="DrugBank" id="DB14002">
    <property type="generic name" value="D-alpha-Tocopherol acetate"/>
</dbReference>
<dbReference type="DrugBank" id="DB04209">
    <property type="generic name" value="Dequalinium"/>
</dbReference>
<dbReference type="DrugBank" id="DB08846">
    <property type="generic name" value="Ellagic acid"/>
</dbReference>
<dbReference type="DrugBank" id="DB06486">
    <property type="generic name" value="Enzastaurin"/>
</dbReference>
<dbReference type="DrugBank" id="DB01738">
    <property type="generic name" value="Phosphorylcolamine"/>
</dbReference>
<dbReference type="DrugBank" id="DB11829">
    <property type="generic name" value="Ruboxistaurin"/>
</dbReference>
<dbReference type="DrugBank" id="DB12369">
    <property type="generic name" value="Sotrastaurin"/>
</dbReference>
<dbReference type="DrugBank" id="DB02010">
    <property type="generic name" value="Staurosporine"/>
</dbReference>
<dbReference type="DrugBank" id="DB00675">
    <property type="generic name" value="Tamoxifen"/>
</dbReference>
<dbReference type="DrugBank" id="DB00163">
    <property type="generic name" value="Vitamin E"/>
</dbReference>
<dbReference type="DrugCentral" id="P05771"/>
<dbReference type="GuidetoPHARMACOLOGY" id="1483"/>
<dbReference type="TCDB" id="8.A.104.1.4">
    <property type="family name" value="the 5'-amp-activated protein kinase (ampk) family"/>
</dbReference>
<dbReference type="iPTMnet" id="P05771"/>
<dbReference type="MetOSite" id="P05771"/>
<dbReference type="PhosphoSitePlus" id="P05771"/>
<dbReference type="SwissPalm" id="P05771"/>
<dbReference type="BioMuta" id="PRKCB"/>
<dbReference type="DMDM" id="20141488"/>
<dbReference type="CPTAC" id="CPTAC-1338"/>
<dbReference type="CPTAC" id="CPTAC-3051"/>
<dbReference type="CPTAC" id="CPTAC-3052"/>
<dbReference type="jPOST" id="P05771"/>
<dbReference type="MassIVE" id="P05771"/>
<dbReference type="PaxDb" id="9606-ENSP00000305355"/>
<dbReference type="PeptideAtlas" id="P05771"/>
<dbReference type="ProteomicsDB" id="51855">
    <molecule id="P05771-1"/>
</dbReference>
<dbReference type="ProteomicsDB" id="51856">
    <molecule id="P05771-2"/>
</dbReference>
<dbReference type="Pumba" id="P05771"/>
<dbReference type="Antibodypedia" id="3547">
    <property type="antibodies" value="867 antibodies from 46 providers"/>
</dbReference>
<dbReference type="DNASU" id="5579"/>
<dbReference type="Ensembl" id="ENST00000321728.12">
    <molecule id="P05771-1"/>
    <property type="protein sequence ID" value="ENSP00000318315.7"/>
    <property type="gene ID" value="ENSG00000166501.14"/>
</dbReference>
<dbReference type="Ensembl" id="ENST00000643927.1">
    <molecule id="P05771-2"/>
    <property type="protein sequence ID" value="ENSP00000496129.1"/>
    <property type="gene ID" value="ENSG00000166501.14"/>
</dbReference>
<dbReference type="GeneID" id="5579"/>
<dbReference type="KEGG" id="hsa:5579"/>
<dbReference type="MANE-Select" id="ENST00000643927.1">
    <molecule id="P05771-2"/>
    <property type="protein sequence ID" value="ENSP00000496129.1"/>
    <property type="RefSeq nucleotide sequence ID" value="NM_002738.7"/>
    <property type="RefSeq protein sequence ID" value="NP_002729.2"/>
</dbReference>
<dbReference type="UCSC" id="uc002dmd.4">
    <molecule id="P05771-1"/>
    <property type="organism name" value="human"/>
</dbReference>
<dbReference type="AGR" id="HGNC:9395"/>
<dbReference type="CTD" id="5579"/>
<dbReference type="DisGeNET" id="5579"/>
<dbReference type="GeneCards" id="PRKCB"/>
<dbReference type="HGNC" id="HGNC:9395">
    <property type="gene designation" value="PRKCB"/>
</dbReference>
<dbReference type="HPA" id="ENSG00000166501">
    <property type="expression patterns" value="Tissue enhanced (brain, lymphoid tissue)"/>
</dbReference>
<dbReference type="MalaCards" id="PRKCB"/>
<dbReference type="MIM" id="176970">
    <property type="type" value="gene"/>
</dbReference>
<dbReference type="neXtProt" id="NX_P05771"/>
<dbReference type="OpenTargets" id="ENSG00000166501"/>
<dbReference type="PharmGKB" id="PA33761"/>
<dbReference type="VEuPathDB" id="HostDB:ENSG00000166501"/>
<dbReference type="eggNOG" id="KOG0696">
    <property type="taxonomic scope" value="Eukaryota"/>
</dbReference>
<dbReference type="GeneTree" id="ENSGT00940000155217"/>
<dbReference type="HOGENOM" id="CLU_000288_54_2_1"/>
<dbReference type="InParanoid" id="P05771"/>
<dbReference type="OMA" id="VVXQLKE"/>
<dbReference type="OrthoDB" id="63267at2759"/>
<dbReference type="PAN-GO" id="P05771">
    <property type="GO annotations" value="3 GO annotations based on evolutionary models"/>
</dbReference>
<dbReference type="PhylomeDB" id="P05771"/>
<dbReference type="TreeFam" id="TF351133"/>
<dbReference type="BRENDA" id="2.7.11.13">
    <property type="organism ID" value="2681"/>
</dbReference>
<dbReference type="PathwayCommons" id="P05771"/>
<dbReference type="Reactome" id="R-HSA-114516">
    <property type="pathway name" value="Disinhibition of SNARE formation"/>
</dbReference>
<dbReference type="Reactome" id="R-HSA-1169091">
    <property type="pathway name" value="Activation of NF-kappaB in B cells"/>
</dbReference>
<dbReference type="Reactome" id="R-HSA-416993">
    <property type="pathway name" value="Trafficking of GluR2-containing AMPA receptors"/>
</dbReference>
<dbReference type="Reactome" id="R-HSA-418597">
    <property type="pathway name" value="G alpha (z) signalling events"/>
</dbReference>
<dbReference type="Reactome" id="R-HSA-4419969">
    <property type="pathway name" value="Depolymerization of the Nuclear Lamina"/>
</dbReference>
<dbReference type="Reactome" id="R-HSA-5099900">
    <property type="pathway name" value="WNT5A-dependent internalization of FZD4"/>
</dbReference>
<dbReference type="Reactome" id="R-HSA-5218921">
    <property type="pathway name" value="VEGFR2 mediated cell proliferation"/>
</dbReference>
<dbReference type="Reactome" id="R-HSA-5668599">
    <property type="pathway name" value="RHO GTPases Activate NADPH Oxidases"/>
</dbReference>
<dbReference type="Reactome" id="R-HSA-76005">
    <property type="pathway name" value="Response to elevated platelet cytosolic Ca2+"/>
</dbReference>
<dbReference type="Reactome" id="R-HSA-8939246">
    <property type="pathway name" value="RUNX1 regulates transcription of genes involved in differentiation of myeloid cells"/>
</dbReference>
<dbReference type="SABIO-RK" id="P05771"/>
<dbReference type="SignaLink" id="P05771"/>
<dbReference type="SIGNOR" id="P05771"/>
<dbReference type="BioGRID-ORCS" id="5579">
    <property type="hits" value="18 hits in 1197 CRISPR screens"/>
</dbReference>
<dbReference type="CD-CODE" id="8C2F96ED">
    <property type="entry name" value="Centrosome"/>
</dbReference>
<dbReference type="CD-CODE" id="FB4E32DD">
    <property type="entry name" value="Presynaptic clusters and postsynaptic densities"/>
</dbReference>
<dbReference type="ChiTaRS" id="PRKCB">
    <property type="organism name" value="human"/>
</dbReference>
<dbReference type="EvolutionaryTrace" id="P05771"/>
<dbReference type="GeneWiki" id="PRKCB1"/>
<dbReference type="GenomeRNAi" id="5579"/>
<dbReference type="Pharos" id="P05771">
    <property type="development level" value="Tchem"/>
</dbReference>
<dbReference type="PRO" id="PR:P05771"/>
<dbReference type="Proteomes" id="UP000005640">
    <property type="component" value="Chromosome 16"/>
</dbReference>
<dbReference type="RNAct" id="P05771">
    <property type="molecule type" value="protein"/>
</dbReference>
<dbReference type="Bgee" id="ENSG00000166501">
    <property type="expression patterns" value="Expressed in middle temporal gyrus and 189 other cell types or tissues"/>
</dbReference>
<dbReference type="ExpressionAtlas" id="P05771">
    <property type="expression patterns" value="baseline and differential"/>
</dbReference>
<dbReference type="GO" id="GO:0044305">
    <property type="term" value="C:calyx of Held"/>
    <property type="evidence" value="ECO:0007669"/>
    <property type="project" value="Ensembl"/>
</dbReference>
<dbReference type="GO" id="GO:0005737">
    <property type="term" value="C:cytoplasm"/>
    <property type="evidence" value="ECO:0000314"/>
    <property type="project" value="UniProtKB"/>
</dbReference>
<dbReference type="GO" id="GO:0005829">
    <property type="term" value="C:cytosol"/>
    <property type="evidence" value="ECO:0000314"/>
    <property type="project" value="HPA"/>
</dbReference>
<dbReference type="GO" id="GO:0070062">
    <property type="term" value="C:extracellular exosome"/>
    <property type="evidence" value="ECO:0007005"/>
    <property type="project" value="UniProtKB"/>
</dbReference>
<dbReference type="GO" id="GO:0005654">
    <property type="term" value="C:nucleoplasm"/>
    <property type="evidence" value="ECO:0000314"/>
    <property type="project" value="HPA"/>
</dbReference>
<dbReference type="GO" id="GO:0005634">
    <property type="term" value="C:nucleus"/>
    <property type="evidence" value="ECO:0000314"/>
    <property type="project" value="UniProtKB"/>
</dbReference>
<dbReference type="GO" id="GO:0005886">
    <property type="term" value="C:plasma membrane"/>
    <property type="evidence" value="ECO:0000314"/>
    <property type="project" value="UniProtKB"/>
</dbReference>
<dbReference type="GO" id="GO:0099523">
    <property type="term" value="C:presynaptic cytosol"/>
    <property type="evidence" value="ECO:0007669"/>
    <property type="project" value="Ensembl"/>
</dbReference>
<dbReference type="GO" id="GO:0008091">
    <property type="term" value="C:spectrin"/>
    <property type="evidence" value="ECO:0007669"/>
    <property type="project" value="Ensembl"/>
</dbReference>
<dbReference type="GO" id="GO:0005524">
    <property type="term" value="F:ATP binding"/>
    <property type="evidence" value="ECO:0007669"/>
    <property type="project" value="UniProtKB-KW"/>
</dbReference>
<dbReference type="GO" id="GO:0005246">
    <property type="term" value="F:calcium channel regulator activity"/>
    <property type="evidence" value="ECO:0007669"/>
    <property type="project" value="Ensembl"/>
</dbReference>
<dbReference type="GO" id="GO:0004698">
    <property type="term" value="F:calcium,diacylglycerol-dependent serine/threonine kinase activity"/>
    <property type="evidence" value="ECO:0000314"/>
    <property type="project" value="UniProtKB"/>
</dbReference>
<dbReference type="GO" id="GO:0003682">
    <property type="term" value="F:chromatin binding"/>
    <property type="evidence" value="ECO:0000314"/>
    <property type="project" value="UniProtKB"/>
</dbReference>
<dbReference type="GO" id="GO:0004697">
    <property type="term" value="F:diacylglycerol-dependent serine/threonine kinase activity"/>
    <property type="evidence" value="ECO:0000269"/>
    <property type="project" value="Reactome"/>
</dbReference>
<dbReference type="GO" id="GO:0042393">
    <property type="term" value="F:histone binding"/>
    <property type="evidence" value="ECO:0000314"/>
    <property type="project" value="UniProtKB"/>
</dbReference>
<dbReference type="GO" id="GO:0035403">
    <property type="term" value="F:histone H3T6 kinase activity"/>
    <property type="evidence" value="ECO:0000314"/>
    <property type="project" value="UniProtKB"/>
</dbReference>
<dbReference type="GO" id="GO:0050681">
    <property type="term" value="F:nuclear androgen receptor binding"/>
    <property type="evidence" value="ECO:0000314"/>
    <property type="project" value="UniProtKB"/>
</dbReference>
<dbReference type="GO" id="GO:0005080">
    <property type="term" value="F:protein kinase C binding"/>
    <property type="evidence" value="ECO:0000353"/>
    <property type="project" value="UniProtKB"/>
</dbReference>
<dbReference type="GO" id="GO:0106310">
    <property type="term" value="F:protein serine kinase activity"/>
    <property type="evidence" value="ECO:0007669"/>
    <property type="project" value="RHEA"/>
</dbReference>
<dbReference type="GO" id="GO:0004674">
    <property type="term" value="F:protein serine/threonine kinase activity"/>
    <property type="evidence" value="ECO:0000318"/>
    <property type="project" value="GO_Central"/>
</dbReference>
<dbReference type="GO" id="GO:0003713">
    <property type="term" value="F:transcription coactivator activity"/>
    <property type="evidence" value="ECO:0000315"/>
    <property type="project" value="UniProtKB"/>
</dbReference>
<dbReference type="GO" id="GO:0008270">
    <property type="term" value="F:zinc ion binding"/>
    <property type="evidence" value="ECO:0007669"/>
    <property type="project" value="UniProtKB-KW"/>
</dbReference>
<dbReference type="GO" id="GO:0002250">
    <property type="term" value="P:adaptive immune response"/>
    <property type="evidence" value="ECO:0007669"/>
    <property type="project" value="UniProtKB-KW"/>
</dbReference>
<dbReference type="GO" id="GO:0006915">
    <property type="term" value="P:apoptotic process"/>
    <property type="evidence" value="ECO:0007669"/>
    <property type="project" value="UniProtKB-KW"/>
</dbReference>
<dbReference type="GO" id="GO:0042113">
    <property type="term" value="P:B cell activation"/>
    <property type="evidence" value="ECO:0000250"/>
    <property type="project" value="UniProtKB"/>
</dbReference>
<dbReference type="GO" id="GO:0050853">
    <property type="term" value="P:B cell receptor signaling pathway"/>
    <property type="evidence" value="ECO:0000250"/>
    <property type="project" value="UniProtKB"/>
</dbReference>
<dbReference type="GO" id="GO:0006816">
    <property type="term" value="P:calcium ion transport"/>
    <property type="evidence" value="ECO:0007669"/>
    <property type="project" value="Ensembl"/>
</dbReference>
<dbReference type="GO" id="GO:0071322">
    <property type="term" value="P:cellular response to carbohydrate stimulus"/>
    <property type="evidence" value="ECO:0007669"/>
    <property type="project" value="Ensembl"/>
</dbReference>
<dbReference type="GO" id="GO:0006874">
    <property type="term" value="P:intracellular calcium ion homeostasis"/>
    <property type="evidence" value="ECO:0007669"/>
    <property type="project" value="Ensembl"/>
</dbReference>
<dbReference type="GO" id="GO:0035556">
    <property type="term" value="P:intracellular signal transduction"/>
    <property type="evidence" value="ECO:0000318"/>
    <property type="project" value="GO_Central"/>
</dbReference>
<dbReference type="GO" id="GO:0042953">
    <property type="term" value="P:lipoprotein transport"/>
    <property type="evidence" value="ECO:0000304"/>
    <property type="project" value="BHF-UCL"/>
</dbReference>
<dbReference type="GO" id="GO:0007077">
    <property type="term" value="P:mitotic nuclear membrane disassembly"/>
    <property type="evidence" value="ECO:0000304"/>
    <property type="project" value="Reactome"/>
</dbReference>
<dbReference type="GO" id="GO:0010829">
    <property type="term" value="P:negative regulation of D-glucose transmembrane transport"/>
    <property type="evidence" value="ECO:0000250"/>
    <property type="project" value="UniProtKB"/>
</dbReference>
<dbReference type="GO" id="GO:0046627">
    <property type="term" value="P:negative regulation of insulin receptor signaling pathway"/>
    <property type="evidence" value="ECO:0000250"/>
    <property type="project" value="UniProtKB"/>
</dbReference>
<dbReference type="GO" id="GO:0007207">
    <property type="term" value="P:phospholipase C-activating G protein-coupled acetylcholine receptor signaling pathway"/>
    <property type="evidence" value="ECO:0007669"/>
    <property type="project" value="Ensembl"/>
</dbReference>
<dbReference type="GO" id="GO:0045766">
    <property type="term" value="P:positive regulation of angiogenesis"/>
    <property type="evidence" value="ECO:0000250"/>
    <property type="project" value="UniProtKB"/>
</dbReference>
<dbReference type="GO" id="GO:0043123">
    <property type="term" value="P:positive regulation of canonical NF-kappaB signal transduction"/>
    <property type="evidence" value="ECO:0000250"/>
    <property type="project" value="UniProtKB"/>
</dbReference>
<dbReference type="GO" id="GO:0032024">
    <property type="term" value="P:positive regulation of insulin secretion"/>
    <property type="evidence" value="ECO:0007669"/>
    <property type="project" value="Ensembl"/>
</dbReference>
<dbReference type="GO" id="GO:0030949">
    <property type="term" value="P:positive regulation of vascular endothelial growth factor receptor signaling pathway"/>
    <property type="evidence" value="ECO:0000250"/>
    <property type="project" value="UniProtKB"/>
</dbReference>
<dbReference type="GO" id="GO:0099171">
    <property type="term" value="P:presynaptic modulation of chemical synaptic transmission"/>
    <property type="evidence" value="ECO:0007669"/>
    <property type="project" value="Ensembl"/>
</dbReference>
<dbReference type="GO" id="GO:0070528">
    <property type="term" value="P:protein kinase C signaling"/>
    <property type="evidence" value="ECO:0000314"/>
    <property type="project" value="UniProtKB"/>
</dbReference>
<dbReference type="GO" id="GO:0006468">
    <property type="term" value="P:protein phosphorylation"/>
    <property type="evidence" value="ECO:0000304"/>
    <property type="project" value="ProtInc"/>
</dbReference>
<dbReference type="GO" id="GO:0010827">
    <property type="term" value="P:regulation of D-glucose transmembrane transport"/>
    <property type="evidence" value="ECO:0000314"/>
    <property type="project" value="UniProtKB"/>
</dbReference>
<dbReference type="GO" id="GO:2000300">
    <property type="term" value="P:regulation of synaptic vesicle exocytosis"/>
    <property type="evidence" value="ECO:0007669"/>
    <property type="project" value="Ensembl"/>
</dbReference>
<dbReference type="GO" id="GO:0006357">
    <property type="term" value="P:regulation of transcription by RNA polymerase II"/>
    <property type="evidence" value="ECO:0000315"/>
    <property type="project" value="UniProtKB"/>
</dbReference>
<dbReference type="GO" id="GO:0007165">
    <property type="term" value="P:signal transduction"/>
    <property type="evidence" value="ECO:0000303"/>
    <property type="project" value="ProtInc"/>
</dbReference>
<dbReference type="CDD" id="cd20833">
    <property type="entry name" value="C1_cPKC_rpt1"/>
    <property type="match status" value="1"/>
</dbReference>
<dbReference type="CDD" id="cd20836">
    <property type="entry name" value="C1_cPKC_rpt2"/>
    <property type="match status" value="1"/>
</dbReference>
<dbReference type="CDD" id="cd04026">
    <property type="entry name" value="C2_PKC_alpha_gamma"/>
    <property type="match status" value="1"/>
</dbReference>
<dbReference type="CDD" id="cd05616">
    <property type="entry name" value="STKc_cPKC_beta"/>
    <property type="match status" value="1"/>
</dbReference>
<dbReference type="FunFam" id="2.60.40.150:FF:000012">
    <property type="entry name" value="Kinase C alpha type"/>
    <property type="match status" value="1"/>
</dbReference>
<dbReference type="FunFam" id="1.10.510.10:FF:000023">
    <property type="entry name" value="Protein kinase C"/>
    <property type="match status" value="1"/>
</dbReference>
<dbReference type="FunFam" id="3.30.200.20:FF:000080">
    <property type="entry name" value="Protein kinase C"/>
    <property type="match status" value="1"/>
</dbReference>
<dbReference type="FunFam" id="3.30.60.20:FF:000006">
    <property type="entry name" value="Protein kinase C"/>
    <property type="match status" value="1"/>
</dbReference>
<dbReference type="FunFam" id="3.30.60.20:FF:000031">
    <property type="entry name" value="Protein kinase C alpha"/>
    <property type="match status" value="1"/>
</dbReference>
<dbReference type="Gene3D" id="3.30.60.20">
    <property type="match status" value="2"/>
</dbReference>
<dbReference type="Gene3D" id="2.60.40.150">
    <property type="entry name" value="C2 domain"/>
    <property type="match status" value="1"/>
</dbReference>
<dbReference type="Gene3D" id="3.30.200.20">
    <property type="entry name" value="Phosphorylase Kinase, domain 1"/>
    <property type="match status" value="2"/>
</dbReference>
<dbReference type="Gene3D" id="1.10.510.10">
    <property type="entry name" value="Transferase(Phosphotransferase) domain 1"/>
    <property type="match status" value="1"/>
</dbReference>
<dbReference type="InterPro" id="IPR000961">
    <property type="entry name" value="AGC-kinase_C"/>
</dbReference>
<dbReference type="InterPro" id="IPR046349">
    <property type="entry name" value="C1-like_sf"/>
</dbReference>
<dbReference type="InterPro" id="IPR000008">
    <property type="entry name" value="C2_dom"/>
</dbReference>
<dbReference type="InterPro" id="IPR035892">
    <property type="entry name" value="C2_domain_sf"/>
</dbReference>
<dbReference type="InterPro" id="IPR034664">
    <property type="entry name" value="cPKC-beta"/>
</dbReference>
<dbReference type="InterPro" id="IPR020454">
    <property type="entry name" value="DAG/PE-bd"/>
</dbReference>
<dbReference type="InterPro" id="IPR011009">
    <property type="entry name" value="Kinase-like_dom_sf"/>
</dbReference>
<dbReference type="InterPro" id="IPR002219">
    <property type="entry name" value="PE/DAG-bd"/>
</dbReference>
<dbReference type="InterPro" id="IPR017892">
    <property type="entry name" value="Pkinase_C"/>
</dbReference>
<dbReference type="InterPro" id="IPR000719">
    <property type="entry name" value="Prot_kinase_dom"/>
</dbReference>
<dbReference type="InterPro" id="IPR017441">
    <property type="entry name" value="Protein_kinase_ATP_BS"/>
</dbReference>
<dbReference type="InterPro" id="IPR014375">
    <property type="entry name" value="Protein_kinase_C_a/b/g"/>
</dbReference>
<dbReference type="InterPro" id="IPR008271">
    <property type="entry name" value="Ser/Thr_kinase_AS"/>
</dbReference>
<dbReference type="PANTHER" id="PTHR24351">
    <property type="entry name" value="RIBOSOMAL PROTEIN S6 KINASE"/>
    <property type="match status" value="1"/>
</dbReference>
<dbReference type="Pfam" id="PF00130">
    <property type="entry name" value="C1_1"/>
    <property type="match status" value="2"/>
</dbReference>
<dbReference type="Pfam" id="PF00168">
    <property type="entry name" value="C2"/>
    <property type="match status" value="1"/>
</dbReference>
<dbReference type="Pfam" id="PF00069">
    <property type="entry name" value="Pkinase"/>
    <property type="match status" value="1"/>
</dbReference>
<dbReference type="Pfam" id="PF00433">
    <property type="entry name" value="Pkinase_C"/>
    <property type="match status" value="1"/>
</dbReference>
<dbReference type="PIRSF" id="PIRSF000550">
    <property type="entry name" value="PKC_alpha"/>
    <property type="match status" value="1"/>
</dbReference>
<dbReference type="PRINTS" id="PR00360">
    <property type="entry name" value="C2DOMAIN"/>
</dbReference>
<dbReference type="PRINTS" id="PR00008">
    <property type="entry name" value="DAGPEDOMAIN"/>
</dbReference>
<dbReference type="SMART" id="SM00109">
    <property type="entry name" value="C1"/>
    <property type="match status" value="2"/>
</dbReference>
<dbReference type="SMART" id="SM00239">
    <property type="entry name" value="C2"/>
    <property type="match status" value="1"/>
</dbReference>
<dbReference type="SMART" id="SM00133">
    <property type="entry name" value="S_TK_X"/>
    <property type="match status" value="1"/>
</dbReference>
<dbReference type="SMART" id="SM00220">
    <property type="entry name" value="S_TKc"/>
    <property type="match status" value="1"/>
</dbReference>
<dbReference type="SUPFAM" id="SSF49562">
    <property type="entry name" value="C2 domain (Calcium/lipid-binding domain, CaLB)"/>
    <property type="match status" value="1"/>
</dbReference>
<dbReference type="SUPFAM" id="SSF57889">
    <property type="entry name" value="Cysteine-rich domain"/>
    <property type="match status" value="2"/>
</dbReference>
<dbReference type="SUPFAM" id="SSF56112">
    <property type="entry name" value="Protein kinase-like (PK-like)"/>
    <property type="match status" value="1"/>
</dbReference>
<dbReference type="PROSITE" id="PS51285">
    <property type="entry name" value="AGC_KINASE_CTER"/>
    <property type="match status" value="1"/>
</dbReference>
<dbReference type="PROSITE" id="PS50004">
    <property type="entry name" value="C2"/>
    <property type="match status" value="1"/>
</dbReference>
<dbReference type="PROSITE" id="PS00107">
    <property type="entry name" value="PROTEIN_KINASE_ATP"/>
    <property type="match status" value="1"/>
</dbReference>
<dbReference type="PROSITE" id="PS50011">
    <property type="entry name" value="PROTEIN_KINASE_DOM"/>
    <property type="match status" value="1"/>
</dbReference>
<dbReference type="PROSITE" id="PS00108">
    <property type="entry name" value="PROTEIN_KINASE_ST"/>
    <property type="match status" value="1"/>
</dbReference>
<dbReference type="PROSITE" id="PS00479">
    <property type="entry name" value="ZF_DAG_PE_1"/>
    <property type="match status" value="2"/>
</dbReference>
<dbReference type="PROSITE" id="PS50081">
    <property type="entry name" value="ZF_DAG_PE_2"/>
    <property type="match status" value="2"/>
</dbReference>
<reference key="1">
    <citation type="journal article" date="1986" name="Science">
        <title>Multiple, distinct forms of bovine and human protein kinase C suggest diversity in cellular signaling pathways.</title>
        <authorList>
            <person name="Coussens L."/>
            <person name="Parker P.J."/>
            <person name="Rhee L."/>
            <person name="Yang-Feng T.L."/>
            <person name="Chen E."/>
            <person name="Waterfield M.D."/>
            <person name="Francke U."/>
            <person name="Ullrich A."/>
        </authorList>
    </citation>
    <scope>NUCLEOTIDE SEQUENCE [MRNA] (ISOFORM BETA-II)</scope>
</reference>
<reference key="2">
    <citation type="journal article" date="1987" name="FEBS Lett.">
        <title>Primary structures of human protein kinase C beta I and beta II differ only in their C-terminal sequences.</title>
        <authorList>
            <person name="Kubo K."/>
            <person name="Ohno S."/>
            <person name="Suzuki K."/>
        </authorList>
    </citation>
    <scope>NUCLEOTIDE SEQUENCE [MRNA] (ISOFORMS BETA-I AND BETA-II)</scope>
</reference>
<reference key="3">
    <citation type="submission" date="2009-04" db="EMBL/GenBank/DDBJ databases">
        <authorList>
            <consortium name="NIEHS SNPs program"/>
        </authorList>
    </citation>
    <scope>NUCLEOTIDE SEQUENCE [GENOMIC DNA]</scope>
</reference>
<reference key="4">
    <citation type="journal article" date="1999" name="Genomics">
        <title>Genome duplications and other features in 12 Mb of DNA sequence from human chromosome 16p and 16q.</title>
        <authorList>
            <person name="Loftus B.J."/>
            <person name="Kim U.-J."/>
            <person name="Sneddon V.P."/>
            <person name="Kalush F."/>
            <person name="Brandon R."/>
            <person name="Fuhrmann J."/>
            <person name="Mason T."/>
            <person name="Crosby M.L."/>
            <person name="Barnstead M."/>
            <person name="Cronin L."/>
            <person name="Mays A.D."/>
            <person name="Cao Y."/>
            <person name="Xu R.X."/>
            <person name="Kang H.-L."/>
            <person name="Mitchell S."/>
            <person name="Eichler E.E."/>
            <person name="Harris P.C."/>
            <person name="Venter J.C."/>
            <person name="Adams M.D."/>
        </authorList>
    </citation>
    <scope>NUCLEOTIDE SEQUENCE [LARGE SCALE GENOMIC DNA]</scope>
</reference>
<reference key="5">
    <citation type="submission" date="2005-09" db="EMBL/GenBank/DDBJ databases">
        <authorList>
            <person name="Mural R.J."/>
            <person name="Istrail S."/>
            <person name="Sutton G.G."/>
            <person name="Florea L."/>
            <person name="Halpern A.L."/>
            <person name="Mobarry C.M."/>
            <person name="Lippert R."/>
            <person name="Walenz B."/>
            <person name="Shatkay H."/>
            <person name="Dew I."/>
            <person name="Miller J.R."/>
            <person name="Flanigan M.J."/>
            <person name="Edwards N.J."/>
            <person name="Bolanos R."/>
            <person name="Fasulo D."/>
            <person name="Halldorsson B.V."/>
            <person name="Hannenhalli S."/>
            <person name="Turner R."/>
            <person name="Yooseph S."/>
            <person name="Lu F."/>
            <person name="Nusskern D.R."/>
            <person name="Shue B.C."/>
            <person name="Zheng X.H."/>
            <person name="Zhong F."/>
            <person name="Delcher A.L."/>
            <person name="Huson D.H."/>
            <person name="Kravitz S.A."/>
            <person name="Mouchard L."/>
            <person name="Reinert K."/>
            <person name="Remington K.A."/>
            <person name="Clark A.G."/>
            <person name="Waterman M.S."/>
            <person name="Eichler E.E."/>
            <person name="Adams M.D."/>
            <person name="Hunkapiller M.W."/>
            <person name="Myers E.W."/>
            <person name="Venter J.C."/>
        </authorList>
    </citation>
    <scope>NUCLEOTIDE SEQUENCE [LARGE SCALE GENOMIC DNA]</scope>
</reference>
<reference key="6">
    <citation type="journal article" date="2004" name="Genome Res.">
        <title>The status, quality, and expansion of the NIH full-length cDNA project: the Mammalian Gene Collection (MGC).</title>
        <authorList>
            <consortium name="The MGC Project Team"/>
        </authorList>
    </citation>
    <scope>NUCLEOTIDE SEQUENCE [LARGE SCALE MRNA]</scope>
    <source>
        <tissue>Hippocampus</tissue>
    </source>
</reference>
<reference key="7">
    <citation type="journal article" date="1995" name="DNA Cell Biol.">
        <title>Autoregulation of cloned human protein kinase C beta and gamma gene promoters in U937 cells.</title>
        <authorList>
            <person name="Mahajna J."/>
            <person name="King P."/>
            <person name="Parker P."/>
            <person name="Haley J."/>
        </authorList>
    </citation>
    <scope>NUCLEOTIDE SEQUENCE [GENOMIC DNA] OF 1-69</scope>
</reference>
<reference key="8">
    <citation type="journal article" date="1992" name="J. Biol. Chem.">
        <title>Positive and negative regulation of the transcription of the human protein kinase C beta gene.</title>
        <authorList>
            <person name="Niino Y.S."/>
            <person name="Ohno S."/>
            <person name="Suzuki K."/>
        </authorList>
    </citation>
    <scope>NUCLEOTIDE SEQUENCE [GENOMIC DNA] OF 1-58</scope>
</reference>
<reference key="9">
    <citation type="journal article" date="1992" name="J. Biol. Chem.">
        <title>Cloning and characterization of the major promoter of the human protein kinase C beta gene. Regulation by phorbol esters.</title>
        <authorList>
            <person name="Obeid L.M."/>
            <person name="Blobe G.C."/>
            <person name="Karolak L.A."/>
            <person name="Hannun Y.A."/>
        </authorList>
    </citation>
    <scope>NUCLEOTIDE SEQUENCE [GENOMIC DNA] OF 1-57</scope>
</reference>
<reference key="10">
    <citation type="journal article" date="2003" name="Nat. Biotechnol.">
        <title>Exploring proteomes and analyzing protein processing by mass spectrometric identification of sorted N-terminal peptides.</title>
        <authorList>
            <person name="Gevaert K."/>
            <person name="Goethals M."/>
            <person name="Martens L."/>
            <person name="Van Damme J."/>
            <person name="Staes A."/>
            <person name="Thomas G.R."/>
            <person name="Vandekerckhove J."/>
        </authorList>
    </citation>
    <scope>PROTEIN SEQUENCE OF 2-19</scope>
    <scope>ACETYLATION AT ALA-2</scope>
    <source>
        <tissue>Platelet</tissue>
    </source>
</reference>
<reference key="11">
    <citation type="submission" date="1997-11" db="EMBL/GenBank/DDBJ databases">
        <title>The genomic structure of the human protein kinase C beta gene (PRKCB).</title>
        <authorList>
            <person name="Greenham J.A."/>
            <person name="Adams M.D."/>
            <person name="Doggett N.A."/>
            <person name="Mole S.E."/>
        </authorList>
    </citation>
    <scope>NUCLEOTIDE SEQUENCE [GENOMIC DNA] OF 97-176</scope>
</reference>
<reference key="12">
    <citation type="journal article" date="1987" name="DNA">
        <title>Alternative splicing increases the diversity of the human protein kinase C family.</title>
        <authorList>
            <person name="Coussens L."/>
            <person name="Rhee L."/>
            <person name="Parker P.J."/>
            <person name="Ullrich A."/>
        </authorList>
    </citation>
    <scope>NUCLEOTIDE SEQUENCE [GENOMIC DNA] OF 609-671</scope>
    <source>
        <tissue>Fetal brain</tissue>
    </source>
</reference>
<reference key="13">
    <citation type="journal article" date="1987" name="Nucleic Acids Res.">
        <title>Nucleotide sequence of the 3' portion of a human gene for protein kinase C beta-I/beta-II.</title>
        <authorList>
            <person name="Kubo K."/>
            <person name="Ohno S."/>
            <person name="Suzuki K."/>
        </authorList>
    </citation>
    <scope>NUCLEOTIDE SEQUENCE [GENOMIC DNA] OF 622-671</scope>
</reference>
<reference key="14">
    <citation type="journal article" date="2001" name="EMBO J.">
        <title>PKCbeta modulates antigen receptor signaling via regulation of Btk membrane localization.</title>
        <authorList>
            <person name="Kang S.W."/>
            <person name="Wahl M.I."/>
            <person name="Chu J."/>
            <person name="Kitaura J."/>
            <person name="Kawakami Y."/>
            <person name="Kato R.M."/>
            <person name="Tabuchi R."/>
            <person name="Tarakhovsky A."/>
            <person name="Kawakami T."/>
            <person name="Turck C.W."/>
            <person name="Witte O.N."/>
            <person name="Rawlings D.J."/>
        </authorList>
    </citation>
    <scope>FUNCTION IN PHOSPHORYLATION OF BTK</scope>
</reference>
<reference key="15">
    <citation type="journal article" date="2005" name="Cancer Res.">
        <title>The protein kinase Cbeta-selective inhibitor, enzastaurin (LY317615.HCl), suppresses signaling through the AKT pathway, induces apoptosis, and suppresses growth of human colon cancer and glioblastoma xenografts.</title>
        <authorList>
            <person name="Graff J.R."/>
            <person name="McNulty A.M."/>
            <person name="Hanna K.R."/>
            <person name="Konicek B.W."/>
            <person name="Lynch R.L."/>
            <person name="Bailey S.N."/>
            <person name="Banks C."/>
            <person name="Capen A."/>
            <person name="Goode R."/>
            <person name="Lewis J.E."/>
            <person name="Sams L."/>
            <person name="Huss K.L."/>
            <person name="Campbell R.M."/>
            <person name="Iversen P.W."/>
            <person name="Neubauer B.L."/>
            <person name="Brown T.J."/>
            <person name="Musib L."/>
            <person name="Geeganage S."/>
            <person name="Thornton D."/>
        </authorList>
    </citation>
    <scope>ACTIVITY REGULATION</scope>
</reference>
<reference key="16">
    <citation type="journal article" date="2008" name="J. Biol. Chem.">
        <title>The phosphatase PHLPP controls the cellular levels of protein kinase C.</title>
        <authorList>
            <person name="Gao T."/>
            <person name="Brognard J."/>
            <person name="Newton A.C."/>
        </authorList>
    </citation>
    <scope>INTERACTION WITH PHLPP1 AND PHLPP2</scope>
</reference>
<reference key="17">
    <citation type="journal article" date="2008" name="J. Proteome Res.">
        <title>Phosphoproteome of resting human platelets.</title>
        <authorList>
            <person name="Zahedi R.P."/>
            <person name="Lewandrowski U."/>
            <person name="Wiesner J."/>
            <person name="Wortelkamp S."/>
            <person name="Moebius J."/>
            <person name="Schuetz C."/>
            <person name="Walter U."/>
            <person name="Gambaryan S."/>
            <person name="Sickmann A."/>
        </authorList>
    </citation>
    <scope>IDENTIFICATION BY MASS SPECTROMETRY [LARGE SCALE ANALYSIS]</scope>
    <source>
        <tissue>Platelet</tissue>
    </source>
</reference>
<reference key="18">
    <citation type="journal article" date="2009" name="J. Biol. Chem.">
        <title>Phosphorylation of activation transcription factor-2 at serine 121 by protein kinase c controls c-Jun-mediated activation of transcription.</title>
        <authorList>
            <person name="Yamasaki T."/>
            <person name="Takahashi A."/>
            <person name="Pan J."/>
            <person name="Yamaguchi N."/>
            <person name="Yokoyama K.K."/>
        </authorList>
    </citation>
    <scope>FUNCTION</scope>
</reference>
<reference key="19">
    <citation type="journal article" date="2009" name="Mol. Cell. Proteomics">
        <title>Large-scale proteomics analysis of the human kinome.</title>
        <authorList>
            <person name="Oppermann F.S."/>
            <person name="Gnad F."/>
            <person name="Olsen J.V."/>
            <person name="Hornberger R."/>
            <person name="Greff Z."/>
            <person name="Keri G."/>
            <person name="Mann M."/>
            <person name="Daub H."/>
        </authorList>
    </citation>
    <scope>PHOSPHORYLATION [LARGE SCALE ANALYSIS] AT THR-504</scope>
    <scope>PHOSPHORYLATION [LARGE SCALE ANALYSIS] AT THR-641 AND SER-660 (ISOFORM BETA-II)</scope>
    <scope>IDENTIFICATION BY MASS SPECTROMETRY [LARGE SCALE ANALYSIS]</scope>
</reference>
<reference key="20">
    <citation type="journal article" date="2010" name="Nature">
        <title>Phosphorylation of histone H3T6 by PKCbeta(I) controls demethylation at histone H3K4.</title>
        <authorList>
            <person name="Metzger E."/>
            <person name="Imhof A."/>
            <person name="Patel D."/>
            <person name="Kahl P."/>
            <person name="Hoffmeyer K."/>
            <person name="Friedrichs N."/>
            <person name="Muller J.M."/>
            <person name="Greschik H."/>
            <person name="Kirfel J."/>
            <person name="Ji S."/>
            <person name="Kunowska N."/>
            <person name="Beisenherz-Huss C."/>
            <person name="Gunther T."/>
            <person name="Buettner R."/>
            <person name="Schule R."/>
        </authorList>
    </citation>
    <scope>FUNCTION IN HISTONE H3 PHOSPHORYLATION</scope>
    <scope>CATALYTIC ACTIVITY</scope>
    <scope>SUBCELLULAR LOCATION</scope>
    <scope>INTERACTION WITH KDM1A; PKN1 AND AR</scope>
</reference>
<reference key="21">
    <citation type="journal article" date="2002" name="J. Biochem.">
        <title>Protein kinase C beta (PKC beta): normal functions and diseases.</title>
        <authorList>
            <person name="Kawakami T."/>
            <person name="Kawakami Y."/>
            <person name="Kitaura J."/>
        </authorList>
    </citation>
    <scope>REVIEW ON FUNCTION</scope>
</reference>
<reference key="22">
    <citation type="journal article" date="2010" name="Rev. Endocr. Metab. Disord.">
        <title>Endothelial dysfunction in diabetes mellitus: molecular mechanisms and clinical implications.</title>
        <authorList>
            <person name="Tabit C.E."/>
            <person name="Chung W.B."/>
            <person name="Hamburg N.M."/>
            <person name="Vita J.A."/>
        </authorList>
    </citation>
    <scope>REVIEW ON FUNCTION</scope>
</reference>
<reference key="23">
    <citation type="journal article" date="2011" name="BMC Syst. Biol.">
        <title>Initial characterization of the human central proteome.</title>
        <authorList>
            <person name="Burkard T.R."/>
            <person name="Planyavsky M."/>
            <person name="Kaupe I."/>
            <person name="Breitwieser F.P."/>
            <person name="Buerckstuemmer T."/>
            <person name="Bennett K.L."/>
            <person name="Superti-Furga G."/>
            <person name="Colinge J."/>
        </authorList>
    </citation>
    <scope>IDENTIFICATION BY MASS SPECTROMETRY [LARGE SCALE ANALYSIS]</scope>
</reference>
<reference key="24">
    <citation type="journal article" date="2013" name="J. Proteome Res.">
        <title>Toward a comprehensive characterization of a human cancer cell phosphoproteome.</title>
        <authorList>
            <person name="Zhou H."/>
            <person name="Di Palma S."/>
            <person name="Preisinger C."/>
            <person name="Peng M."/>
            <person name="Polat A.N."/>
            <person name="Heck A.J."/>
            <person name="Mohammed S."/>
        </authorList>
    </citation>
    <scope>PHOSPHORYLATION [LARGE SCALE ANALYSIS] AT SER-11; THR-17; SER-206; SER-311; THR-314 AND THR-642</scope>
    <scope>IDENTIFICATION BY MASS SPECTROMETRY [LARGE SCALE ANALYSIS]</scope>
    <source>
        <tissue>Erythroleukemia</tissue>
    </source>
</reference>
<reference key="25">
    <citation type="journal article" date="2014" name="J. Proteomics">
        <title>An enzyme assisted RP-RPLC approach for in-depth analysis of human liver phosphoproteome.</title>
        <authorList>
            <person name="Bian Y."/>
            <person name="Song C."/>
            <person name="Cheng K."/>
            <person name="Dong M."/>
            <person name="Wang F."/>
            <person name="Huang J."/>
            <person name="Sun D."/>
            <person name="Wang L."/>
            <person name="Ye M."/>
            <person name="Zou H."/>
        </authorList>
    </citation>
    <scope>PHOSPHORYLATION [LARGE SCALE ANALYSIS] AT THR-641 AND SER-660 (ISOFORM BETA-II)</scope>
    <scope>IDENTIFICATION BY MASS SPECTROMETRY [LARGE SCALE ANALYSIS]</scope>
    <source>
        <tissue>Liver</tissue>
    </source>
</reference>
<reference key="26">
    <citation type="journal article" date="2014" name="Proc. Natl. Acad. Sci. U.S.A.">
        <title>Angiotensin II signaling via protein kinase C phosphorylates Kelch-like 3, preventing WNK4 degradation.</title>
        <authorList>
            <person name="Shibata S."/>
            <person name="Arroyo J.P."/>
            <person name="Castaneda-Bueno M."/>
            <person name="Puthumana J."/>
            <person name="Zhang J."/>
            <person name="Uchida S."/>
            <person name="Stone K.L."/>
            <person name="Lam T.T."/>
            <person name="Lifton R.P."/>
        </authorList>
    </citation>
    <scope>FUNCTION</scope>
    <scope>CATALYTIC ACTIVITY</scope>
</reference>
<reference key="27">
    <citation type="journal article" date="2015" name="Mol. Cell">
        <title>A protein kinase C phosphorylation motif in GLUT1 affects glucose transport and is mutated in GLUT1 deficiency syndrome.</title>
        <authorList>
            <person name="Lee E.E."/>
            <person name="Ma J."/>
            <person name="Sacharidou A."/>
            <person name="Mi W."/>
            <person name="Salato V.K."/>
            <person name="Nguyen N."/>
            <person name="Jiang Y."/>
            <person name="Pascual J.M."/>
            <person name="North P.E."/>
            <person name="Shaul P.W."/>
            <person name="Mettlen M."/>
            <person name="Wang R.C."/>
        </authorList>
    </citation>
    <scope>FUNCTION</scope>
    <scope>CATALYTIC ACTIVITY</scope>
</reference>
<reference key="28">
    <citation type="journal article" date="2022" name="Biochem. J.">
        <title>PKC isoforms activate LRRK1 kinase by phosphorylating conserved residues (Ser1064, Ser1074 and Thr1075) within the CORB GTPase domain.</title>
        <authorList>
            <person name="Malik A.U."/>
            <person name="Karapetsas A."/>
            <person name="Nirujogi R.S."/>
            <person name="Chatterjee D."/>
            <person name="Phung T.K."/>
            <person name="Wightman M."/>
            <person name="Gourlay R."/>
            <person name="Morrice N."/>
            <person name="Mathea S."/>
            <person name="Knapp S."/>
            <person name="Alessi D.R."/>
        </authorList>
    </citation>
    <scope>FUNCTION IN PHOSPHORYLATION OF LRRK1</scope>
    <scope>CATALYTIC ACTIVITY</scope>
</reference>
<reference key="29">
    <citation type="journal article" date="2006" name="Biochemistry">
        <title>Structure of the catalytic domain of human protein kinase C beta II complexed with a bisindolylmaleimide inhibitor.</title>
        <authorList>
            <person name="Grodsky N."/>
            <person name="Li Y."/>
            <person name="Bouzida D."/>
            <person name="Love R."/>
            <person name="Jensen J."/>
            <person name="Nodes B."/>
            <person name="Nonomiya J."/>
            <person name="Grant S."/>
        </authorList>
    </citation>
    <scope>X-RAY CRYSTALLOGRAPHY (2.6 ANGSTROMS) OF 321-660 IN COMPLEX WITH INHIBITOR</scope>
    <scope>PHOSPHORYLATION AT THR-500; THR-642 AND SER-661</scope>
</reference>
<reference key="30">
    <citation type="journal article" date="2007" name="Nature">
        <title>Patterns of somatic mutation in human cancer genomes.</title>
        <authorList>
            <person name="Greenman C."/>
            <person name="Stephens P."/>
            <person name="Smith R."/>
            <person name="Dalgliesh G.L."/>
            <person name="Hunter C."/>
            <person name="Bignell G."/>
            <person name="Davies H."/>
            <person name="Teague J."/>
            <person name="Butler A."/>
            <person name="Stevens C."/>
            <person name="Edkins S."/>
            <person name="O'Meara S."/>
            <person name="Vastrik I."/>
            <person name="Schmidt E.E."/>
            <person name="Avis T."/>
            <person name="Barthorpe S."/>
            <person name="Bhamra G."/>
            <person name="Buck G."/>
            <person name="Choudhury B."/>
            <person name="Clements J."/>
            <person name="Cole J."/>
            <person name="Dicks E."/>
            <person name="Forbes S."/>
            <person name="Gray K."/>
            <person name="Halliday K."/>
            <person name="Harrison R."/>
            <person name="Hills K."/>
            <person name="Hinton J."/>
            <person name="Jenkinson A."/>
            <person name="Jones D."/>
            <person name="Menzies A."/>
            <person name="Mironenko T."/>
            <person name="Perry J."/>
            <person name="Raine K."/>
            <person name="Richardson D."/>
            <person name="Shepherd R."/>
            <person name="Small A."/>
            <person name="Tofts C."/>
            <person name="Varian J."/>
            <person name="Webb T."/>
            <person name="West S."/>
            <person name="Widaa S."/>
            <person name="Yates A."/>
            <person name="Cahill D.P."/>
            <person name="Louis D.N."/>
            <person name="Goldstraw P."/>
            <person name="Nicholson A.G."/>
            <person name="Brasseur F."/>
            <person name="Looijenga L."/>
            <person name="Weber B.L."/>
            <person name="Chiew Y.-E."/>
            <person name="DeFazio A."/>
            <person name="Greaves M.F."/>
            <person name="Green A.R."/>
            <person name="Campbell P."/>
            <person name="Birney E."/>
            <person name="Easton D.F."/>
            <person name="Chenevix-Trench G."/>
            <person name="Tan M.-H."/>
            <person name="Khoo S.K."/>
            <person name="Teh B.T."/>
            <person name="Yuen S.T."/>
            <person name="Leung S.Y."/>
            <person name="Wooster R."/>
            <person name="Futreal P.A."/>
            <person name="Stratton M.R."/>
        </authorList>
    </citation>
    <scope>VARIANTS [LARGE SCALE ANALYSIS] MET-144; MET-496 AND HIS-588</scope>
</reference>
<keyword id="KW-0002">3D-structure</keyword>
<keyword id="KW-0007">Acetylation</keyword>
<keyword id="KW-1064">Adaptive immunity</keyword>
<keyword id="KW-0025">Alternative splicing</keyword>
<keyword id="KW-0053">Apoptosis</keyword>
<keyword id="KW-0067">ATP-binding</keyword>
<keyword id="KW-0106">Calcium</keyword>
<keyword id="KW-0156">Chromatin regulator</keyword>
<keyword id="KW-0963">Cytoplasm</keyword>
<keyword id="KW-0903">Direct protein sequencing</keyword>
<keyword id="KW-0391">Immunity</keyword>
<keyword id="KW-0418">Kinase</keyword>
<keyword id="KW-0472">Membrane</keyword>
<keyword id="KW-0479">Metal-binding</keyword>
<keyword id="KW-0547">Nucleotide-binding</keyword>
<keyword id="KW-0539">Nucleus</keyword>
<keyword id="KW-0597">Phosphoprotein</keyword>
<keyword id="KW-1267">Proteomics identification</keyword>
<keyword id="KW-1185">Reference proteome</keyword>
<keyword id="KW-0677">Repeat</keyword>
<keyword id="KW-0723">Serine/threonine-protein kinase</keyword>
<keyword id="KW-0804">Transcription</keyword>
<keyword id="KW-0805">Transcription regulation</keyword>
<keyword id="KW-0808">Transferase</keyword>
<keyword id="KW-0862">Zinc</keyword>
<keyword id="KW-0863">Zinc-finger</keyword>
<sequence>MADPAAGPPPSEGEESTVRFARKGALRQKNVHEVKNHKFTARFFKQPTFCSHCTDFIWGFGKQGFQCQVCCFVVHKRCHEFVTFSCPGADKGPASDDPRSKHKFKIHTYSSPTFCDHCGSLLYGLIHQGMKCDTCMMNVHKRCVMNVPSLCGTDHTERRGRIYIQAHIDRDVLIVLVRDAKNLVPMDPNGLSDPYVKLKLIPDPKSESKQKTKTIKCSLNPEWNETFRFQLKESDKDRRLSVEIWDWDLTSRNDFMGSLSFGISELQKASVDGWFKLLSQEEGEYFNVPVPPEGSEANEELRQKFERAKISQGTKVPEEKTTNTVSKFDNNGNRDRMKLTDFNFLMVLGKGSFGKVMLSERKGTDELYAVKILKKDVVIQDDDVECTMVEKRVLALPGKPPFLTQLHSCFQTMDRLYFVMEYVNGGDLMYHIQQVGRFKEPHAVFYAAEIAIGLFFLQSKGIIYRDLKLDNVMLDSEGHIKIADFGMCKENIWDGVTTKTFCGTPDYIAPEIIAYQPYGKSVDWWAFGVLLYEMLAGQAPFEGEDEDELFQSIMEHNVAYPKSMSKEAVAICKGLMTKHPGKRLGCGPEGERDIKEHAFFRYIDWEKLERKEIQPPYKPKARDKRDTSNFDKEFTRQPVELTPTDKLFIMNLDQNEFAGFSYTNPEFVINV</sequence>
<protein>
    <recommendedName>
        <fullName>Protein kinase C beta type</fullName>
        <shortName>PKC-B</shortName>
        <shortName>PKC-beta</shortName>
        <ecNumber evidence="18 19 20 21">2.7.11.13</ecNumber>
    </recommendedName>
</protein>
<feature type="initiator methionine" description="Removed" evidence="12">
    <location>
        <position position="1"/>
    </location>
</feature>
<feature type="chain" id="PRO_0000055684" description="Protein kinase C beta type">
    <location>
        <begin position="2"/>
        <end position="671"/>
    </location>
</feature>
<feature type="domain" description="C2" evidence="5">
    <location>
        <begin position="158"/>
        <end position="275"/>
    </location>
</feature>
<feature type="domain" description="Protein kinase" evidence="6">
    <location>
        <begin position="342"/>
        <end position="600"/>
    </location>
</feature>
<feature type="domain" description="AGC-kinase C-terminal" evidence="8">
    <location>
        <begin position="601"/>
        <end position="671"/>
    </location>
</feature>
<feature type="zinc finger region" description="Phorbol-ester/DAG-type 1" evidence="7">
    <location>
        <begin position="36"/>
        <end position="86"/>
    </location>
</feature>
<feature type="zinc finger region" description="Phorbol-ester/DAG-type 2" evidence="7">
    <location>
        <begin position="101"/>
        <end position="151"/>
    </location>
</feature>
<feature type="region of interest" description="Disordered" evidence="10">
    <location>
        <begin position="311"/>
        <end position="330"/>
    </location>
</feature>
<feature type="region of interest" description="Disordered" evidence="10">
    <location>
        <begin position="614"/>
        <end position="635"/>
    </location>
</feature>
<feature type="compositionally biased region" description="Basic and acidic residues" evidence="10">
    <location>
        <begin position="623"/>
        <end position="635"/>
    </location>
</feature>
<feature type="active site" description="Proton acceptor" evidence="6 9">
    <location>
        <position position="466"/>
    </location>
</feature>
<feature type="binding site" evidence="2">
    <location>
        <position position="186"/>
    </location>
    <ligand>
        <name>Ca(2+)</name>
        <dbReference type="ChEBI" id="CHEBI:29108"/>
        <label>1</label>
    </ligand>
</feature>
<feature type="binding site" evidence="2">
    <location>
        <position position="187"/>
    </location>
    <ligand>
        <name>Ca(2+)</name>
        <dbReference type="ChEBI" id="CHEBI:29108"/>
        <label>1</label>
    </ligand>
</feature>
<feature type="binding site" evidence="2">
    <location>
        <position position="187"/>
    </location>
    <ligand>
        <name>Ca(2+)</name>
        <dbReference type="ChEBI" id="CHEBI:29108"/>
        <label>2</label>
    </ligand>
</feature>
<feature type="binding site" evidence="2">
    <location>
        <position position="193"/>
    </location>
    <ligand>
        <name>Ca(2+)</name>
        <dbReference type="ChEBI" id="CHEBI:29108"/>
        <label>2</label>
    </ligand>
</feature>
<feature type="binding site" evidence="2">
    <location>
        <position position="246"/>
    </location>
    <ligand>
        <name>Ca(2+)</name>
        <dbReference type="ChEBI" id="CHEBI:29108"/>
        <label>1</label>
    </ligand>
</feature>
<feature type="binding site" evidence="2">
    <location>
        <position position="246"/>
    </location>
    <ligand>
        <name>Ca(2+)</name>
        <dbReference type="ChEBI" id="CHEBI:29108"/>
        <label>2</label>
    </ligand>
</feature>
<feature type="binding site" evidence="2">
    <location>
        <position position="247"/>
    </location>
    <ligand>
        <name>Ca(2+)</name>
        <dbReference type="ChEBI" id="CHEBI:29108"/>
        <label>2</label>
    </ligand>
</feature>
<feature type="binding site" evidence="2">
    <location>
        <position position="248"/>
    </location>
    <ligand>
        <name>Ca(2+)</name>
        <dbReference type="ChEBI" id="CHEBI:29108"/>
        <label>1</label>
    </ligand>
</feature>
<feature type="binding site" evidence="2">
    <location>
        <position position="248"/>
    </location>
    <ligand>
        <name>Ca(2+)</name>
        <dbReference type="ChEBI" id="CHEBI:29108"/>
        <label>2</label>
    </ligand>
</feature>
<feature type="binding site" evidence="2">
    <location>
        <position position="248"/>
    </location>
    <ligand>
        <name>Ca(2+)</name>
        <dbReference type="ChEBI" id="CHEBI:29108"/>
        <label>3</label>
    </ligand>
</feature>
<feature type="binding site" evidence="2">
    <location>
        <position position="251"/>
    </location>
    <ligand>
        <name>Ca(2+)</name>
        <dbReference type="ChEBI" id="CHEBI:29108"/>
        <label>3</label>
    </ligand>
</feature>
<feature type="binding site" evidence="2">
    <location>
        <position position="252"/>
    </location>
    <ligand>
        <name>Ca(2+)</name>
        <dbReference type="ChEBI" id="CHEBI:29108"/>
        <label>3</label>
    </ligand>
</feature>
<feature type="binding site" evidence="2">
    <location>
        <position position="254"/>
    </location>
    <ligand>
        <name>Ca(2+)</name>
        <dbReference type="ChEBI" id="CHEBI:29108"/>
        <label>1</label>
    </ligand>
</feature>
<feature type="binding site" evidence="2">
    <location>
        <position position="254"/>
    </location>
    <ligand>
        <name>Ca(2+)</name>
        <dbReference type="ChEBI" id="CHEBI:29108"/>
        <label>3</label>
    </ligand>
</feature>
<feature type="binding site" evidence="6">
    <location>
        <begin position="348"/>
        <end position="356"/>
    </location>
    <ligand>
        <name>ATP</name>
        <dbReference type="ChEBI" id="CHEBI:30616"/>
    </ligand>
</feature>
<feature type="binding site" evidence="6">
    <location>
        <position position="371"/>
    </location>
    <ligand>
        <name>ATP</name>
        <dbReference type="ChEBI" id="CHEBI:30616"/>
    </ligand>
</feature>
<feature type="modified residue" description="N-acetylalanine" evidence="12">
    <location>
        <position position="2"/>
    </location>
</feature>
<feature type="modified residue" description="Phosphoserine" evidence="27">
    <location>
        <position position="11"/>
    </location>
</feature>
<feature type="modified residue" description="Phosphoserine; by autocatalysis" evidence="2 4">
    <location>
        <position position="16"/>
    </location>
</feature>
<feature type="modified residue" description="Phosphothreonine" evidence="27">
    <location>
        <position position="17"/>
    </location>
</feature>
<feature type="modified residue" description="Phosphoserine" evidence="27">
    <location>
        <position position="206"/>
    </location>
</feature>
<feature type="modified residue" description="Phosphothreonine; by autocatalysis" evidence="1">
    <location>
        <position position="250"/>
    </location>
</feature>
<feature type="modified residue" description="Phosphoserine" evidence="27">
    <location>
        <position position="311"/>
    </location>
</feature>
<feature type="modified residue" description="Phosphothreonine" evidence="27">
    <location>
        <position position="314"/>
    </location>
</feature>
<feature type="modified residue" description="Phosphothreonine; by autocatalysis" evidence="2 4">
    <location>
        <position position="324"/>
    </location>
</feature>
<feature type="modified residue" description="Phosphothreonine; by PDPK1" evidence="25">
    <location>
        <position position="500"/>
    </location>
</feature>
<feature type="modified residue" description="Phosphothreonine" evidence="26">
    <location>
        <position position="504"/>
    </location>
</feature>
<feature type="modified residue" description="Phosphothreonine; by autocatalysis" evidence="2">
    <location>
        <position position="635"/>
    </location>
</feature>
<feature type="modified residue" description="Phosphothreonine" evidence="14 27">
    <location>
        <position position="642"/>
    </location>
</feature>
<feature type="modified residue" description="Phosphoserine; by autocatalysis" evidence="14">
    <location>
        <position position="661"/>
    </location>
</feature>
<feature type="modified residue" description="Phosphotyrosine; by SYK" evidence="3">
    <location>
        <position position="662"/>
    </location>
</feature>
<feature type="splice variant" id="VSP_004738" description="In isoform Beta-II." evidence="22 23">
    <original>RDKRDTSNFDKEFTRQPVELTPTDKLFIMNLDQNEFAGFSYTNPEFVINV</original>
    <variation>CGRNAENFDRFFTRHPPVLTPPDQEVIRNIDQSEFEGFSFVNSEFLKPEVKS</variation>
    <location>
        <begin position="622"/>
        <end position="671"/>
    </location>
</feature>
<feature type="sequence variant" id="VAR_042304" description="In a colorectal adenocarcinoma sample; somatic mutation; dbSNP:rs764534677." evidence="15">
    <original>V</original>
    <variation>M</variation>
    <location>
        <position position="144"/>
    </location>
</feature>
<feature type="sequence variant" id="VAR_042305" description="In a glioblastoma multiforme sample; somatic mutation; dbSNP:rs1466858740." evidence="15">
    <original>V</original>
    <variation>M</variation>
    <location>
        <position position="496"/>
    </location>
</feature>
<feature type="sequence variant" id="VAR_042306" description="In dbSNP:rs35631544." evidence="15">
    <original>P</original>
    <variation>H</variation>
    <location>
        <position position="588"/>
    </location>
</feature>
<feature type="sequence conflict" description="In Ref. 7; CAA44393." evidence="24" ref="7">
    <original>V</original>
    <variation>G</variation>
    <location>
        <position position="69"/>
    </location>
</feature>
<feature type="strand" evidence="29">
    <location>
        <begin position="342"/>
        <end position="351"/>
    </location>
</feature>
<feature type="strand" evidence="29">
    <location>
        <begin position="354"/>
        <end position="361"/>
    </location>
</feature>
<feature type="strand" evidence="29">
    <location>
        <begin position="364"/>
        <end position="374"/>
    </location>
</feature>
<feature type="helix" evidence="29">
    <location>
        <begin position="375"/>
        <end position="380"/>
    </location>
</feature>
<feature type="helix" evidence="29">
    <location>
        <begin position="384"/>
        <end position="394"/>
    </location>
</feature>
<feature type="strand" evidence="29">
    <location>
        <begin position="406"/>
        <end position="411"/>
    </location>
</feature>
<feature type="strand" evidence="29">
    <location>
        <begin position="413"/>
        <end position="421"/>
    </location>
</feature>
<feature type="helix" evidence="29">
    <location>
        <begin position="428"/>
        <end position="435"/>
    </location>
</feature>
<feature type="helix" evidence="29">
    <location>
        <begin position="440"/>
        <end position="459"/>
    </location>
</feature>
<feature type="helix" evidence="29">
    <location>
        <begin position="469"/>
        <end position="471"/>
    </location>
</feature>
<feature type="strand" evidence="29">
    <location>
        <begin position="472"/>
        <end position="474"/>
    </location>
</feature>
<feature type="strand" evidence="29">
    <location>
        <begin position="480"/>
        <end position="482"/>
    </location>
</feature>
<feature type="helix" evidence="29">
    <location>
        <begin position="505"/>
        <end position="507"/>
    </location>
</feature>
<feature type="helix" evidence="29">
    <location>
        <begin position="510"/>
        <end position="513"/>
    </location>
</feature>
<feature type="helix" evidence="29">
    <location>
        <begin position="521"/>
        <end position="536"/>
    </location>
</feature>
<feature type="helix" evidence="29">
    <location>
        <begin position="546"/>
        <end position="555"/>
    </location>
</feature>
<feature type="helix" evidence="29">
    <location>
        <begin position="566"/>
        <end position="575"/>
    </location>
</feature>
<feature type="helix" evidence="29">
    <location>
        <begin position="590"/>
        <end position="595"/>
    </location>
</feature>
<feature type="helix" evidence="29">
    <location>
        <begin position="598"/>
        <end position="600"/>
    </location>
</feature>
<feature type="helix" evidence="29">
    <location>
        <begin position="605"/>
        <end position="609"/>
    </location>
</feature>
<feature type="helix" evidence="29">
    <location>
        <begin position="629"/>
        <end position="636"/>
    </location>
</feature>
<feature type="helix" evidence="29">
    <location>
        <begin position="646"/>
        <end position="651"/>
    </location>
</feature>
<feature type="turn" evidence="29">
    <location>
        <begin position="654"/>
        <end position="657"/>
    </location>
</feature>
<feature type="strand" evidence="30">
    <location>
        <begin position="658"/>
        <end position="660"/>
    </location>
</feature>
<feature type="modified residue" description="Phosphothreonine" evidence="26 28">
    <location sequence="P05771-2">
        <position position="641"/>
    </location>
</feature>
<feature type="modified residue" description="Phosphoserine" evidence="26 28">
    <location sequence="P05771-2">
        <position position="660"/>
    </location>
</feature>
<comment type="function">
    <text evidence="3 11 17 18 19 20 21">Calcium-activated, phospholipid- and diacylglycerol (DAG)-dependent serine/threonine-protein kinase involved in various cellular processes such as regulation of the B-cell receptor (BCR) signalosome, oxidative stress-induced apoptosis, androgen receptor-dependent transcription regulation, insulin signaling and endothelial cells proliferation. Plays a key role in B-cell activation by regulating BCR-induced NF-kappa-B activation. Mediates the activation of the canonical NF-kappa-B pathway (NFKB1) by direct phosphorylation of CARD11/CARMA1 at 'Ser-559', 'Ser-644' and 'Ser-652'. Phosphorylation induces CARD11/CARMA1 association with lipid rafts and recruitment of the BCL10-MALT1 complex as well as MAP3K7/TAK1, which then activates IKK complex, resulting in nuclear translocation and activation of NFKB1. Plays a direct role in the negative feedback regulation of the BCR signaling, by down-modulating BTK function via direct phosphorylation of BTK at 'Ser-180', which results in the alteration of BTK plasma membrane localization and in turn inhibition of BTK activity (PubMed:11598012). Involved in apoptosis following oxidative damage: in case of oxidative conditions, specifically phosphorylates 'Ser-36' of isoform p66Shc of SHC1, leading to mitochondrial accumulation of p66Shc, where p66Shc acts as a reactive oxygen species producer. Acts as a coactivator of androgen receptor (AR)-dependent transcription, by being recruited to AR target genes and specifically mediating phosphorylation of 'Thr-6' of histone H3 (H3T6ph), a specific tag for epigenetic transcriptional activation that prevents demethylation of histone H3 'Lys-4' (H3K4me) by LSD1/KDM1A (PubMed:20228790). In insulin signaling, may function downstream of IRS1 in muscle cells and mediate insulin-dependent DNA synthesis through the RAF1-MAPK/ERK signaling cascade. Participates in the regulation of glucose transport in adipocytes by negatively modulating the insulin-stimulated translocation of the glucose transporter SLC2A4/GLUT4. Phosphorylates SLC2A1/GLUT1, promoting glucose uptake by SLC2A1/GLUT1 (PubMed:25982116). Under high glucose in pancreatic beta-cells, is probably involved in the inhibition of the insulin gene transcription, via regulation of MYC expression. In endothelial cells, activation of PRKCB induces increased phosphorylation of RB1, increased VEGFA-induced cell proliferation, and inhibits PI3K/AKT-dependent nitric oxide synthase (NOS3/eNOS) regulation by insulin, which causes endothelial dysfunction. Also involved in triglyceride homeostasis (By similarity). Phosphorylates ATF2 which promotes cooperation between ATF2 and JUN, activating transcription (PubMed:19176525). Phosphorylates KLHL3 in response to angiotensin II signaling, decreasing the interaction between KLHL3 and WNK4 (PubMed:25313067). Phosphorylates and activates LRRK1, which phosphorylates RAB proteins involved in intracellular trafficking (PubMed:36040231).</text>
</comment>
<comment type="catalytic activity">
    <reaction evidence="18 20 21">
        <text>L-seryl-[protein] + ATP = O-phospho-L-seryl-[protein] + ADP + H(+)</text>
        <dbReference type="Rhea" id="RHEA:17989"/>
        <dbReference type="Rhea" id="RHEA-COMP:9863"/>
        <dbReference type="Rhea" id="RHEA-COMP:11604"/>
        <dbReference type="ChEBI" id="CHEBI:15378"/>
        <dbReference type="ChEBI" id="CHEBI:29999"/>
        <dbReference type="ChEBI" id="CHEBI:30616"/>
        <dbReference type="ChEBI" id="CHEBI:83421"/>
        <dbReference type="ChEBI" id="CHEBI:456216"/>
        <dbReference type="EC" id="2.7.11.13"/>
    </reaction>
    <physiologicalReaction direction="left-to-right" evidence="18 20">
        <dbReference type="Rhea" id="RHEA:17990"/>
    </physiologicalReaction>
</comment>
<comment type="catalytic activity">
    <reaction evidence="18 19 21">
        <text>L-threonyl-[protein] + ATP = O-phospho-L-threonyl-[protein] + ADP + H(+)</text>
        <dbReference type="Rhea" id="RHEA:46608"/>
        <dbReference type="Rhea" id="RHEA-COMP:11060"/>
        <dbReference type="Rhea" id="RHEA-COMP:11605"/>
        <dbReference type="ChEBI" id="CHEBI:15378"/>
        <dbReference type="ChEBI" id="CHEBI:30013"/>
        <dbReference type="ChEBI" id="CHEBI:30616"/>
        <dbReference type="ChEBI" id="CHEBI:61977"/>
        <dbReference type="ChEBI" id="CHEBI:456216"/>
        <dbReference type="EC" id="2.7.11.13"/>
    </reaction>
    <physiologicalReaction direction="left-to-right" evidence="18">
        <dbReference type="Rhea" id="RHEA:46609"/>
    </physiologicalReaction>
</comment>
<comment type="cofactor">
    <cofactor evidence="5">
        <name>Ca(2+)</name>
        <dbReference type="ChEBI" id="CHEBI:29108"/>
    </cofactor>
    <text evidence="2">Binds 3 Ca(2+) ions per subunit. The ions are bound to the C2 domain.</text>
</comment>
<comment type="activity regulation">
    <text evidence="13">Classical (or conventional) PKCs (PRKCA, PRKCB and PRKCG) are activated by calcium and diacylglycerol (DAG) in the presence of phosphatidylserine. Three specific sites; Thr-500 (activation loop of the kinase domain), Thr-642 (turn motif) and Ser-661 (hydrophobic region), need to be phosphorylated for its full activation. Specifically inhibited by enzastaurin (LY317615).</text>
</comment>
<comment type="subunit">
    <text evidence="1 14 16 18">Interacts with PDPK1/PDK1 (By similarity). Interacts in vitro with PRKCBP1. Interacts with PHLPP1 and PHLPP2; both proteins mediate its dephosphorylation. Interacts with KDM1A/LSD1, PKN1 and AR.</text>
</comment>
<comment type="interaction">
    <interactant intactId="EBI-706216">
        <id>P05771</id>
    </interactant>
    <interactant intactId="EBI-744700">
        <id>Q8NEM2</id>
        <label>SHCBP1</label>
    </interactant>
    <organismsDiffer>false</organismsDiffer>
    <experiments>3</experiments>
</comment>
<comment type="interaction">
    <interactant intactId="EBI-706216">
        <id>P05771</id>
    </interactant>
    <interactant intactId="EBI-717399">
        <id>Q9BSI4</id>
        <label>TINF2</label>
    </interactant>
    <organismsDiffer>false</organismsDiffer>
    <experiments>2</experiments>
</comment>
<comment type="interaction">
    <interactant intactId="EBI-5774492">
        <id>P05771-1</id>
    </interactant>
    <interactant intactId="EBI-15599570">
        <id>O60341-1</id>
        <label>KDM1A</label>
    </interactant>
    <organismsDiffer>false</organismsDiffer>
    <experiments>2</experiments>
</comment>
<comment type="interaction">
    <interactant intactId="EBI-5774511">
        <id>P05771-2</id>
    </interactant>
    <interactant intactId="EBI-18899653">
        <id>Q6DHV7-2</id>
        <label>ADAL</label>
    </interactant>
    <organismsDiffer>false</organismsDiffer>
    <experiments>3</experiments>
</comment>
<comment type="interaction">
    <interactant intactId="EBI-5774511">
        <id>P05771-2</id>
    </interactant>
    <interactant intactId="EBI-1383687">
        <id>Q9UQM7</id>
        <label>CAMK2A</label>
    </interactant>
    <organismsDiffer>false</organismsDiffer>
    <experiments>3</experiments>
</comment>
<comment type="interaction">
    <interactant intactId="EBI-5774511">
        <id>P05771-2</id>
    </interactant>
    <interactant intactId="EBI-25830459">
        <id>Q6ZQX7-4</id>
        <label>LIAT1</label>
    </interactant>
    <organismsDiffer>false</organismsDiffer>
    <experiments>3</experiments>
</comment>
<comment type="interaction">
    <interactant intactId="EBI-5774511">
        <id>P05771-2</id>
    </interactant>
    <interactant intactId="EBI-2511516">
        <id>O60346</id>
        <label>PHLPP1</label>
    </interactant>
    <organismsDiffer>false</organismsDiffer>
    <experiments>5</experiments>
</comment>
<comment type="interaction">
    <interactant intactId="EBI-5774511">
        <id>P05771-2</id>
    </interactant>
    <interactant intactId="EBI-2511496">
        <id>Q6ZVD8</id>
        <label>PHLPP2</label>
    </interactant>
    <organismsDiffer>false</organismsDiffer>
    <experiments>2</experiments>
</comment>
<comment type="subcellular location">
    <subcellularLocation>
        <location evidence="1">Cytoplasm</location>
    </subcellularLocation>
    <subcellularLocation>
        <location evidence="18">Nucleus</location>
    </subcellularLocation>
    <subcellularLocation>
        <location evidence="1">Membrane</location>
        <topology evidence="1">Peripheral membrane protein</topology>
    </subcellularLocation>
</comment>
<comment type="alternative products">
    <event type="alternative splicing"/>
    <isoform>
        <id>P05771-1</id>
        <name>Beta-I</name>
        <name>PRKCB1</name>
        <sequence type="displayed"/>
    </isoform>
    <isoform>
        <id>P05771-2</id>
        <name>Beta-II</name>
        <name>PRKCB2</name>
        <sequence type="described" ref="VSP_004738"/>
    </isoform>
</comment>
<comment type="PTM">
    <text evidence="1">Phosphorylation on Thr-500 within the activation loop renders it competent to autophosphorylate. Subsequent autophosphorylation of Thr-642 maintains catalytic competence, and autophosphorylation on Ser-661 appears to release the kinase into the cytosol. Autophosphorylation on other sites i.e. in the N-terminal and hinge regions have no effect on enzyme activity. Phosphorylation at Tyr-662 by SYK induces binding with GRB2 and contributes to the activation of MAPK/ERK signaling cascade (By similarity).</text>
</comment>
<comment type="similarity">
    <text evidence="24">Belongs to the protein kinase superfamily. AGC Ser/Thr protein kinase family. PKC subfamily.</text>
</comment>
<proteinExistence type="evidence at protein level"/>
<evidence type="ECO:0000250" key="1"/>
<evidence type="ECO:0000250" key="2">
    <source>
        <dbReference type="UniProtKB" id="P68403"/>
    </source>
</evidence>
<evidence type="ECO:0000250" key="3">
    <source>
        <dbReference type="UniProtKB" id="P68404"/>
    </source>
</evidence>
<evidence type="ECO:0000255" key="4"/>
<evidence type="ECO:0000255" key="5">
    <source>
        <dbReference type="PROSITE-ProRule" id="PRU00041"/>
    </source>
</evidence>
<evidence type="ECO:0000255" key="6">
    <source>
        <dbReference type="PROSITE-ProRule" id="PRU00159"/>
    </source>
</evidence>
<evidence type="ECO:0000255" key="7">
    <source>
        <dbReference type="PROSITE-ProRule" id="PRU00226"/>
    </source>
</evidence>
<evidence type="ECO:0000255" key="8">
    <source>
        <dbReference type="PROSITE-ProRule" id="PRU00618"/>
    </source>
</evidence>
<evidence type="ECO:0000255" key="9">
    <source>
        <dbReference type="PROSITE-ProRule" id="PRU10027"/>
    </source>
</evidence>
<evidence type="ECO:0000256" key="10">
    <source>
        <dbReference type="SAM" id="MobiDB-lite"/>
    </source>
</evidence>
<evidence type="ECO:0000269" key="11">
    <source>
    </source>
</evidence>
<evidence type="ECO:0000269" key="12">
    <source>
    </source>
</evidence>
<evidence type="ECO:0000269" key="13">
    <source>
    </source>
</evidence>
<evidence type="ECO:0000269" key="14">
    <source>
    </source>
</evidence>
<evidence type="ECO:0000269" key="15">
    <source>
    </source>
</evidence>
<evidence type="ECO:0000269" key="16">
    <source>
    </source>
</evidence>
<evidence type="ECO:0000269" key="17">
    <source>
    </source>
</evidence>
<evidence type="ECO:0000269" key="18">
    <source>
    </source>
</evidence>
<evidence type="ECO:0000269" key="19">
    <source>
    </source>
</evidence>
<evidence type="ECO:0000269" key="20">
    <source>
    </source>
</evidence>
<evidence type="ECO:0000269" key="21">
    <source>
    </source>
</evidence>
<evidence type="ECO:0000303" key="22">
    <source>
    </source>
</evidence>
<evidence type="ECO:0000303" key="23">
    <source>
    </source>
</evidence>
<evidence type="ECO:0000305" key="24"/>
<evidence type="ECO:0000305" key="25">
    <source>
    </source>
</evidence>
<evidence type="ECO:0007744" key="26">
    <source>
    </source>
</evidence>
<evidence type="ECO:0007744" key="27">
    <source>
    </source>
</evidence>
<evidence type="ECO:0007744" key="28">
    <source>
    </source>
</evidence>
<evidence type="ECO:0007829" key="29">
    <source>
        <dbReference type="PDB" id="2I0E"/>
    </source>
</evidence>
<evidence type="ECO:0007829" key="30">
    <source>
        <dbReference type="PDB" id="8SG2"/>
    </source>
</evidence>
<gene>
    <name type="primary">PRKCB</name>
    <name type="synonym">PKCB</name>
    <name type="synonym">PRKCB1</name>
</gene>
<organism>
    <name type="scientific">Homo sapiens</name>
    <name type="common">Human</name>
    <dbReference type="NCBI Taxonomy" id="9606"/>
    <lineage>
        <taxon>Eukaryota</taxon>
        <taxon>Metazoa</taxon>
        <taxon>Chordata</taxon>
        <taxon>Craniata</taxon>
        <taxon>Vertebrata</taxon>
        <taxon>Euteleostomi</taxon>
        <taxon>Mammalia</taxon>
        <taxon>Eutheria</taxon>
        <taxon>Euarchontoglires</taxon>
        <taxon>Primates</taxon>
        <taxon>Haplorrhini</taxon>
        <taxon>Catarrhini</taxon>
        <taxon>Hominidae</taxon>
        <taxon>Homo</taxon>
    </lineage>
</organism>